<feature type="chain" id="PRO_1000096036" description="Bifunctional purine biosynthesis protein PurH">
    <location>
        <begin position="1"/>
        <end position="521"/>
    </location>
</feature>
<feature type="domain" description="MGS-like" evidence="2">
    <location>
        <begin position="1"/>
        <end position="147"/>
    </location>
</feature>
<protein>
    <recommendedName>
        <fullName evidence="1">Bifunctional purine biosynthesis protein PurH</fullName>
    </recommendedName>
    <domain>
        <recommendedName>
            <fullName evidence="1">Phosphoribosylaminoimidazolecarboxamide formyltransferase</fullName>
            <ecNumber evidence="1">2.1.2.3</ecNumber>
        </recommendedName>
        <alternativeName>
            <fullName evidence="1">AICAR transformylase</fullName>
        </alternativeName>
    </domain>
    <domain>
        <recommendedName>
            <fullName evidence="1">IMP cyclohydrolase</fullName>
            <ecNumber evidence="1">3.5.4.10</ecNumber>
        </recommendedName>
        <alternativeName>
            <fullName evidence="1">ATIC</fullName>
        </alternativeName>
        <alternativeName>
            <fullName evidence="1">IMP synthase</fullName>
        </alternativeName>
        <alternativeName>
            <fullName evidence="1">Inosinicase</fullName>
        </alternativeName>
    </domain>
</protein>
<proteinExistence type="inferred from homology"/>
<keyword id="KW-0378">Hydrolase</keyword>
<keyword id="KW-0511">Multifunctional enzyme</keyword>
<keyword id="KW-0658">Purine biosynthesis</keyword>
<keyword id="KW-0808">Transferase</keyword>
<evidence type="ECO:0000255" key="1">
    <source>
        <dbReference type="HAMAP-Rule" id="MF_00139"/>
    </source>
</evidence>
<evidence type="ECO:0000255" key="2">
    <source>
        <dbReference type="PROSITE-ProRule" id="PRU01202"/>
    </source>
</evidence>
<sequence length="521" mass="55945">MGEITRALISVSDKRGVVEFARRLQDFGVEILSTGGTAKALMADGVAVQEVGDYTGFPELLEGRLKTLHPKIHGGLLAKRDDSSHTRQMAEYGIPAIDLLCVNLYPFAETIASADCTLEEAMENIDIGGPTMLRAAAKNWEGVTVLVDPDDYAAVLQEMEQSYGGVGASTRFRLATKVFAHTARYDGAIANYLSSLGPDGNRTTFPQTLSLQFKKAQDLRYGENPHQAAAFYRDGSGGGLADAHQLQGKELSYNNIGDGDAAVALVMEFAEPACCVVKHGNPCGVAVGPDLLGAYQRAWAGDPISAFGGIVACNRPLDAQTAELISDQFIEMVLAPAILPDARPILAKRKNLRVLAFDDGRAWRRTGWDYKRVRGGLLVQNFDQAMEAETDWKVVSERAPTVQEARDLAFVWRVGKYVRSNAIVYGREGQTVGIGAGQMSRVDAARCGVAKALELGFDLHGAALASDAFFPFRDGIDAAAAAGVKAIIQPGGSIRDEEVIASANEHGIAMVFTGVRHFRHG</sequence>
<accession>B5EL42</accession>
<comment type="catalytic activity">
    <reaction evidence="1">
        <text>(6R)-10-formyltetrahydrofolate + 5-amino-1-(5-phospho-beta-D-ribosyl)imidazole-4-carboxamide = 5-formamido-1-(5-phospho-D-ribosyl)imidazole-4-carboxamide + (6S)-5,6,7,8-tetrahydrofolate</text>
        <dbReference type="Rhea" id="RHEA:22192"/>
        <dbReference type="ChEBI" id="CHEBI:57453"/>
        <dbReference type="ChEBI" id="CHEBI:58467"/>
        <dbReference type="ChEBI" id="CHEBI:58475"/>
        <dbReference type="ChEBI" id="CHEBI:195366"/>
        <dbReference type="EC" id="2.1.2.3"/>
    </reaction>
</comment>
<comment type="catalytic activity">
    <reaction evidence="1">
        <text>IMP + H2O = 5-formamido-1-(5-phospho-D-ribosyl)imidazole-4-carboxamide</text>
        <dbReference type="Rhea" id="RHEA:18445"/>
        <dbReference type="ChEBI" id="CHEBI:15377"/>
        <dbReference type="ChEBI" id="CHEBI:58053"/>
        <dbReference type="ChEBI" id="CHEBI:58467"/>
        <dbReference type="EC" id="3.5.4.10"/>
    </reaction>
</comment>
<comment type="pathway">
    <text evidence="1">Purine metabolism; IMP biosynthesis via de novo pathway; 5-formamido-1-(5-phospho-D-ribosyl)imidazole-4-carboxamide from 5-amino-1-(5-phospho-D-ribosyl)imidazole-4-carboxamide (10-formyl THF route): step 1/1.</text>
</comment>
<comment type="pathway">
    <text evidence="1">Purine metabolism; IMP biosynthesis via de novo pathway; IMP from 5-formamido-1-(5-phospho-D-ribosyl)imidazole-4-carboxamide: step 1/1.</text>
</comment>
<comment type="domain">
    <text evidence="1">The IMP cyclohydrolase activity resides in the N-terminal region.</text>
</comment>
<comment type="similarity">
    <text evidence="1">Belongs to the PurH family.</text>
</comment>
<dbReference type="EC" id="2.1.2.3" evidence="1"/>
<dbReference type="EC" id="3.5.4.10" evidence="1"/>
<dbReference type="EMBL" id="CP001132">
    <property type="protein sequence ID" value="ACH84128.1"/>
    <property type="molecule type" value="Genomic_DNA"/>
</dbReference>
<dbReference type="RefSeq" id="WP_012537086.1">
    <property type="nucleotide sequence ID" value="NC_011206.1"/>
</dbReference>
<dbReference type="SMR" id="B5EL42"/>
<dbReference type="GeneID" id="65281368"/>
<dbReference type="KEGG" id="afe:Lferr_1907"/>
<dbReference type="eggNOG" id="COG0138">
    <property type="taxonomic scope" value="Bacteria"/>
</dbReference>
<dbReference type="HOGENOM" id="CLU_016316_5_2_6"/>
<dbReference type="UniPathway" id="UPA00074">
    <property type="reaction ID" value="UER00133"/>
</dbReference>
<dbReference type="UniPathway" id="UPA00074">
    <property type="reaction ID" value="UER00135"/>
</dbReference>
<dbReference type="GO" id="GO:0005829">
    <property type="term" value="C:cytosol"/>
    <property type="evidence" value="ECO:0007669"/>
    <property type="project" value="TreeGrafter"/>
</dbReference>
<dbReference type="GO" id="GO:0003937">
    <property type="term" value="F:IMP cyclohydrolase activity"/>
    <property type="evidence" value="ECO:0007669"/>
    <property type="project" value="UniProtKB-UniRule"/>
</dbReference>
<dbReference type="GO" id="GO:0004643">
    <property type="term" value="F:phosphoribosylaminoimidazolecarboxamide formyltransferase activity"/>
    <property type="evidence" value="ECO:0007669"/>
    <property type="project" value="UniProtKB-UniRule"/>
</dbReference>
<dbReference type="GO" id="GO:0006189">
    <property type="term" value="P:'de novo' IMP biosynthetic process"/>
    <property type="evidence" value="ECO:0007669"/>
    <property type="project" value="UniProtKB-UniRule"/>
</dbReference>
<dbReference type="CDD" id="cd01421">
    <property type="entry name" value="IMPCH"/>
    <property type="match status" value="1"/>
</dbReference>
<dbReference type="FunFam" id="3.40.140.20:FF:000001">
    <property type="entry name" value="Bifunctional purine biosynthesis protein PurH"/>
    <property type="match status" value="1"/>
</dbReference>
<dbReference type="FunFam" id="3.40.50.1380:FF:000001">
    <property type="entry name" value="Bifunctional purine biosynthesis protein PurH"/>
    <property type="match status" value="1"/>
</dbReference>
<dbReference type="Gene3D" id="3.40.140.20">
    <property type="match status" value="2"/>
</dbReference>
<dbReference type="Gene3D" id="3.40.50.1380">
    <property type="entry name" value="Methylglyoxal synthase-like domain"/>
    <property type="match status" value="1"/>
</dbReference>
<dbReference type="HAMAP" id="MF_00139">
    <property type="entry name" value="PurH"/>
    <property type="match status" value="1"/>
</dbReference>
<dbReference type="InterPro" id="IPR024051">
    <property type="entry name" value="AICAR_Tfase_dup_dom_sf"/>
</dbReference>
<dbReference type="InterPro" id="IPR016193">
    <property type="entry name" value="Cytidine_deaminase-like"/>
</dbReference>
<dbReference type="InterPro" id="IPR011607">
    <property type="entry name" value="MGS-like_dom"/>
</dbReference>
<dbReference type="InterPro" id="IPR036914">
    <property type="entry name" value="MGS-like_dom_sf"/>
</dbReference>
<dbReference type="InterPro" id="IPR002695">
    <property type="entry name" value="PurH-like"/>
</dbReference>
<dbReference type="NCBIfam" id="NF002049">
    <property type="entry name" value="PRK00881.1"/>
    <property type="match status" value="1"/>
</dbReference>
<dbReference type="NCBIfam" id="TIGR00355">
    <property type="entry name" value="purH"/>
    <property type="match status" value="1"/>
</dbReference>
<dbReference type="PANTHER" id="PTHR11692:SF0">
    <property type="entry name" value="BIFUNCTIONAL PURINE BIOSYNTHESIS PROTEIN ATIC"/>
    <property type="match status" value="1"/>
</dbReference>
<dbReference type="PANTHER" id="PTHR11692">
    <property type="entry name" value="BIFUNCTIONAL PURINE BIOSYNTHESIS PROTEIN PURH"/>
    <property type="match status" value="1"/>
</dbReference>
<dbReference type="Pfam" id="PF01808">
    <property type="entry name" value="AICARFT_IMPCHas"/>
    <property type="match status" value="1"/>
</dbReference>
<dbReference type="Pfam" id="PF02142">
    <property type="entry name" value="MGS"/>
    <property type="match status" value="1"/>
</dbReference>
<dbReference type="PIRSF" id="PIRSF000414">
    <property type="entry name" value="AICARFT_IMPCHas"/>
    <property type="match status" value="1"/>
</dbReference>
<dbReference type="SMART" id="SM00798">
    <property type="entry name" value="AICARFT_IMPCHas"/>
    <property type="match status" value="1"/>
</dbReference>
<dbReference type="SMART" id="SM00851">
    <property type="entry name" value="MGS"/>
    <property type="match status" value="1"/>
</dbReference>
<dbReference type="SUPFAM" id="SSF53927">
    <property type="entry name" value="Cytidine deaminase-like"/>
    <property type="match status" value="1"/>
</dbReference>
<dbReference type="SUPFAM" id="SSF52335">
    <property type="entry name" value="Methylglyoxal synthase-like"/>
    <property type="match status" value="1"/>
</dbReference>
<dbReference type="PROSITE" id="PS51855">
    <property type="entry name" value="MGS"/>
    <property type="match status" value="1"/>
</dbReference>
<organism>
    <name type="scientific">Acidithiobacillus ferrooxidans (strain ATCC 53993 / BNL-5-31)</name>
    <name type="common">Leptospirillum ferrooxidans (ATCC 53993)</name>
    <dbReference type="NCBI Taxonomy" id="380394"/>
    <lineage>
        <taxon>Bacteria</taxon>
        <taxon>Pseudomonadati</taxon>
        <taxon>Pseudomonadota</taxon>
        <taxon>Acidithiobacillia</taxon>
        <taxon>Acidithiobacillales</taxon>
        <taxon>Acidithiobacillaceae</taxon>
        <taxon>Acidithiobacillus</taxon>
    </lineage>
</organism>
<name>PUR9_ACIF5</name>
<gene>
    <name evidence="1" type="primary">purH</name>
    <name type="ordered locus">Lferr_1907</name>
</gene>
<reference key="1">
    <citation type="submission" date="2008-08" db="EMBL/GenBank/DDBJ databases">
        <title>Complete sequence of Acidithiobacillus ferrooxidans ATCC 53993.</title>
        <authorList>
            <person name="Lucas S."/>
            <person name="Copeland A."/>
            <person name="Lapidus A."/>
            <person name="Glavina del Rio T."/>
            <person name="Dalin E."/>
            <person name="Tice H."/>
            <person name="Bruce D."/>
            <person name="Goodwin L."/>
            <person name="Pitluck S."/>
            <person name="Sims D."/>
            <person name="Brettin T."/>
            <person name="Detter J.C."/>
            <person name="Han C."/>
            <person name="Kuske C.R."/>
            <person name="Larimer F."/>
            <person name="Land M."/>
            <person name="Hauser L."/>
            <person name="Kyrpides N."/>
            <person name="Lykidis A."/>
            <person name="Borole A.P."/>
        </authorList>
    </citation>
    <scope>NUCLEOTIDE SEQUENCE [LARGE SCALE GENOMIC DNA]</scope>
    <source>
        <strain>ATCC 53993 / BNL-5-31</strain>
    </source>
</reference>